<name>ODPB_RAT</name>
<keyword id="KW-0007">Acetylation</keyword>
<keyword id="KW-0119">Carbohydrate metabolism</keyword>
<keyword id="KW-0903">Direct protein sequencing</keyword>
<keyword id="KW-0313">Glucose metabolism</keyword>
<keyword id="KW-0479">Metal-binding</keyword>
<keyword id="KW-0496">Mitochondrion</keyword>
<keyword id="KW-0560">Oxidoreductase</keyword>
<keyword id="KW-0597">Phosphoprotein</keyword>
<keyword id="KW-0630">Potassium</keyword>
<keyword id="KW-0670">Pyruvate</keyword>
<keyword id="KW-1185">Reference proteome</keyword>
<keyword id="KW-0786">Thiamine pyrophosphate</keyword>
<keyword id="KW-0809">Transit peptide</keyword>
<keyword id="KW-0816">Tricarboxylic acid cycle</keyword>
<sequence length="359" mass="38982">MAAVAGLVRGPLRQASGLLKRRFHRSAPAAVQLTVREAINQGMDEELERDEKVFLLGEEVAQYDGAYKVSRGLWKKYGDKRIIDTPISEMGFAGIAVGAAMAGLRPICEFMTFNFSMQAIDQVINSAAKTYYMSAGLQPVPIVFRGPNGASAGVAAQHSQCFAAWYGHCPGLKVVSPWNSEDAKGLIKSAIRDDNPVVMLENELMYGVAFELPTEAQSKDFLIPIGKAKIERQGTHITVVAHSRPVGHCLEAAAVLSKEGIECEVINLRTIRPMDIEAIEASVMKTNHLVTVEGGWPQFGVGAEICARIMEGPAFNFLDAPAVRVTGADVPMPYAKILEDNSIPQVKDIIFAIKKTLNI</sequence>
<gene>
    <name type="primary">Pdhb</name>
</gene>
<evidence type="ECO:0000250" key="1"/>
<evidence type="ECO:0000250" key="2">
    <source>
        <dbReference type="UniProtKB" id="P11177"/>
    </source>
</evidence>
<evidence type="ECO:0000250" key="3">
    <source>
        <dbReference type="UniProtKB" id="Q9D051"/>
    </source>
</evidence>
<evidence type="ECO:0000269" key="4">
    <source ref="3"/>
</evidence>
<evidence type="ECO:0000305" key="5"/>
<dbReference type="EC" id="1.2.4.1"/>
<dbReference type="EMBL" id="BC079137">
    <property type="protein sequence ID" value="AAH79137.1"/>
    <property type="molecule type" value="mRNA"/>
</dbReference>
<dbReference type="PIR" id="S15892">
    <property type="entry name" value="S15892"/>
</dbReference>
<dbReference type="RefSeq" id="NP_001007621.1">
    <property type="nucleotide sequence ID" value="NM_001007620.1"/>
</dbReference>
<dbReference type="RefSeq" id="XP_006251816.1">
    <property type="nucleotide sequence ID" value="XM_006251754.1"/>
</dbReference>
<dbReference type="SMR" id="P49432"/>
<dbReference type="BioGRID" id="253064">
    <property type="interactions" value="4"/>
</dbReference>
<dbReference type="ComplexPortal" id="CPX-378">
    <property type="entry name" value="Pyruvate dehydrogenase E1 heterotetramer"/>
</dbReference>
<dbReference type="FunCoup" id="P49432">
    <property type="interactions" value="2062"/>
</dbReference>
<dbReference type="IntAct" id="P49432">
    <property type="interactions" value="4"/>
</dbReference>
<dbReference type="MINT" id="P49432"/>
<dbReference type="STRING" id="10116.ENSRNOP00000075450"/>
<dbReference type="CarbonylDB" id="P49432"/>
<dbReference type="GlyGen" id="P49432">
    <property type="glycosylation" value="2 sites, 1 O-linked glycan (2 sites)"/>
</dbReference>
<dbReference type="iPTMnet" id="P49432"/>
<dbReference type="PhosphoSitePlus" id="P49432"/>
<dbReference type="jPOST" id="P49432"/>
<dbReference type="PaxDb" id="10116-ENSRNOP00000010545"/>
<dbReference type="GeneID" id="289950"/>
<dbReference type="KEGG" id="rno:289950"/>
<dbReference type="AGR" id="RGD:1359146"/>
<dbReference type="CTD" id="5162"/>
<dbReference type="RGD" id="1359146">
    <property type="gene designation" value="Pdhb"/>
</dbReference>
<dbReference type="VEuPathDB" id="HostDB:ENSRNOG00000007895"/>
<dbReference type="eggNOG" id="KOG0524">
    <property type="taxonomic scope" value="Eukaryota"/>
</dbReference>
<dbReference type="HOGENOM" id="CLU_012907_1_1_1"/>
<dbReference type="InParanoid" id="P49432"/>
<dbReference type="OrthoDB" id="8819at9989"/>
<dbReference type="PhylomeDB" id="P49432"/>
<dbReference type="TreeFam" id="TF105674"/>
<dbReference type="Reactome" id="R-RNO-204174">
    <property type="pathway name" value="Regulation of pyruvate dehydrogenase (PDH) complex"/>
</dbReference>
<dbReference type="Reactome" id="R-RNO-5362517">
    <property type="pathway name" value="Signaling by Retinoic Acid"/>
</dbReference>
<dbReference type="Reactome" id="R-RNO-9837999">
    <property type="pathway name" value="Mitochondrial protein degradation"/>
</dbReference>
<dbReference type="Reactome" id="R-RNO-9861559">
    <property type="pathway name" value="PDH complex synthesizes acetyl-CoA from PYR"/>
</dbReference>
<dbReference type="PRO" id="PR:P49432"/>
<dbReference type="Proteomes" id="UP000002494">
    <property type="component" value="Chromosome 15"/>
</dbReference>
<dbReference type="Bgee" id="ENSRNOG00000007895">
    <property type="expression patterns" value="Expressed in heart and 20 other cell types or tissues"/>
</dbReference>
<dbReference type="ExpressionAtlas" id="P49432">
    <property type="expression patterns" value="baseline and differential"/>
</dbReference>
<dbReference type="GO" id="GO:0005759">
    <property type="term" value="C:mitochondrial matrix"/>
    <property type="evidence" value="ECO:0007669"/>
    <property type="project" value="UniProtKB-SubCell"/>
</dbReference>
<dbReference type="GO" id="GO:0005739">
    <property type="term" value="C:mitochondrion"/>
    <property type="evidence" value="ECO:0000266"/>
    <property type="project" value="RGD"/>
</dbReference>
<dbReference type="GO" id="GO:0045254">
    <property type="term" value="C:pyruvate dehydrogenase complex"/>
    <property type="evidence" value="ECO:0000314"/>
    <property type="project" value="RGD"/>
</dbReference>
<dbReference type="GO" id="GO:0046872">
    <property type="term" value="F:metal ion binding"/>
    <property type="evidence" value="ECO:0007669"/>
    <property type="project" value="UniProtKB-KW"/>
</dbReference>
<dbReference type="GO" id="GO:0004739">
    <property type="term" value="F:pyruvate dehydrogenase (acetyl-transferring) activity"/>
    <property type="evidence" value="ECO:0000314"/>
    <property type="project" value="RGD"/>
</dbReference>
<dbReference type="GO" id="GO:0006006">
    <property type="term" value="P:glucose metabolic process"/>
    <property type="evidence" value="ECO:0007669"/>
    <property type="project" value="UniProtKB-KW"/>
</dbReference>
<dbReference type="GO" id="GO:0006086">
    <property type="term" value="P:pyruvate decarboxylation to acetyl-CoA"/>
    <property type="evidence" value="ECO:0000314"/>
    <property type="project" value="RGD"/>
</dbReference>
<dbReference type="GO" id="GO:0006099">
    <property type="term" value="P:tricarboxylic acid cycle"/>
    <property type="evidence" value="ECO:0007669"/>
    <property type="project" value="UniProtKB-KW"/>
</dbReference>
<dbReference type="CDD" id="cd07036">
    <property type="entry name" value="TPP_PYR_E1-PDHc-beta_like"/>
    <property type="match status" value="1"/>
</dbReference>
<dbReference type="FunFam" id="3.40.50.920:FF:000001">
    <property type="entry name" value="Pyruvate dehydrogenase E1 beta subunit"/>
    <property type="match status" value="1"/>
</dbReference>
<dbReference type="FunFam" id="3.40.50.970:FF:000006">
    <property type="entry name" value="Pyruvate dehydrogenase E1 component subunit beta"/>
    <property type="match status" value="1"/>
</dbReference>
<dbReference type="Gene3D" id="3.40.50.920">
    <property type="match status" value="1"/>
</dbReference>
<dbReference type="Gene3D" id="3.40.50.970">
    <property type="match status" value="1"/>
</dbReference>
<dbReference type="InterPro" id="IPR027110">
    <property type="entry name" value="PDHB_mito-type"/>
</dbReference>
<dbReference type="InterPro" id="IPR029061">
    <property type="entry name" value="THDP-binding"/>
</dbReference>
<dbReference type="InterPro" id="IPR009014">
    <property type="entry name" value="Transketo_C/PFOR_II"/>
</dbReference>
<dbReference type="InterPro" id="IPR005475">
    <property type="entry name" value="Transketolase-like_Pyr-bd"/>
</dbReference>
<dbReference type="InterPro" id="IPR033248">
    <property type="entry name" value="Transketolase_C"/>
</dbReference>
<dbReference type="NCBIfam" id="NF006667">
    <property type="entry name" value="PRK09212.1"/>
    <property type="match status" value="1"/>
</dbReference>
<dbReference type="NCBIfam" id="NF008854">
    <property type="entry name" value="PRK11892.1"/>
    <property type="match status" value="1"/>
</dbReference>
<dbReference type="PANTHER" id="PTHR11624">
    <property type="entry name" value="DEHYDROGENASE RELATED"/>
    <property type="match status" value="1"/>
</dbReference>
<dbReference type="PANTHER" id="PTHR11624:SF96">
    <property type="entry name" value="PYRUVATE DEHYDROGENASE E1 COMPONENT SUBUNIT BETA, MITOCHONDRIAL"/>
    <property type="match status" value="1"/>
</dbReference>
<dbReference type="Pfam" id="PF02779">
    <property type="entry name" value="Transket_pyr"/>
    <property type="match status" value="1"/>
</dbReference>
<dbReference type="Pfam" id="PF02780">
    <property type="entry name" value="Transketolase_C"/>
    <property type="match status" value="1"/>
</dbReference>
<dbReference type="SMART" id="SM00861">
    <property type="entry name" value="Transket_pyr"/>
    <property type="match status" value="1"/>
</dbReference>
<dbReference type="SUPFAM" id="SSF52518">
    <property type="entry name" value="Thiamin diphosphate-binding fold (THDP-binding)"/>
    <property type="match status" value="1"/>
</dbReference>
<dbReference type="SUPFAM" id="SSF52922">
    <property type="entry name" value="TK C-terminal domain-like"/>
    <property type="match status" value="1"/>
</dbReference>
<protein>
    <recommendedName>
        <fullName>Pyruvate dehydrogenase E1 component subunit beta, mitochondrial</fullName>
        <shortName>PDHE1-B</shortName>
        <ecNumber>1.2.4.1</ecNumber>
    </recommendedName>
</protein>
<proteinExistence type="evidence at protein level"/>
<organism>
    <name type="scientific">Rattus norvegicus</name>
    <name type="common">Rat</name>
    <dbReference type="NCBI Taxonomy" id="10116"/>
    <lineage>
        <taxon>Eukaryota</taxon>
        <taxon>Metazoa</taxon>
        <taxon>Chordata</taxon>
        <taxon>Craniata</taxon>
        <taxon>Vertebrata</taxon>
        <taxon>Euteleostomi</taxon>
        <taxon>Mammalia</taxon>
        <taxon>Eutheria</taxon>
        <taxon>Euarchontoglires</taxon>
        <taxon>Glires</taxon>
        <taxon>Rodentia</taxon>
        <taxon>Myomorpha</taxon>
        <taxon>Muroidea</taxon>
        <taxon>Muridae</taxon>
        <taxon>Murinae</taxon>
        <taxon>Rattus</taxon>
    </lineage>
</organism>
<accession>P49432</accession>
<accession>Q6AY95</accession>
<reference key="1">
    <citation type="journal article" date="1991" name="Biochim. Biophys. Acta">
        <title>The alpha-ketoacid dehydrogenase complexes. Sequence similarity of rat pyruvate dehydrogenase with Escherichia coli and Azotobacter vinelandii alpha-ketoglutarate dehydrogenase.</title>
        <authorList>
            <person name="Matuda S."/>
            <person name="Nakano K."/>
            <person name="Ohta S."/>
            <person name="Saheki T."/>
            <person name="Kawanishi Y."/>
            <person name="Miyata T."/>
        </authorList>
    </citation>
    <scope>NUCLEOTIDE SEQUENCE [MRNA]</scope>
</reference>
<reference key="2">
    <citation type="journal article" date="2004" name="Genome Res.">
        <title>The status, quality, and expansion of the NIH full-length cDNA project: the Mammalian Gene Collection (MGC).</title>
        <authorList>
            <consortium name="The MGC Project Team"/>
        </authorList>
    </citation>
    <scope>NUCLEOTIDE SEQUENCE [LARGE SCALE MRNA]</scope>
    <source>
        <tissue>Kidney</tissue>
    </source>
</reference>
<reference key="3">
    <citation type="submission" date="1996-03" db="UniProtKB">
        <authorList>
            <person name="Dunn M.J."/>
        </authorList>
    </citation>
    <scope>PROTEIN SEQUENCE OF 31-38</scope>
    <source>
        <tissue>Heart</tissue>
    </source>
</reference>
<reference key="4">
    <citation type="submission" date="2007-04" db="UniProtKB">
        <authorList>
            <person name="Lubec G."/>
            <person name="Afjehi-Sadat L."/>
            <person name="Diao W."/>
        </authorList>
    </citation>
    <scope>PROTEIN SEQUENCE OF 286-324</scope>
    <scope>IDENTIFICATION BY MASS SPECTROMETRY</scope>
    <source>
        <strain>Sprague-Dawley</strain>
        <tissue>Hippocampus</tissue>
        <tissue>Spinal cord</tissue>
    </source>
</reference>
<feature type="transit peptide" description="Mitochondrion" evidence="4">
    <location>
        <begin position="1"/>
        <end position="30"/>
    </location>
</feature>
<feature type="chain" id="PRO_0000020459" description="Pyruvate dehydrogenase E1 component subunit beta, mitochondrial">
    <location>
        <begin position="31"/>
        <end position="359"/>
    </location>
</feature>
<feature type="binding site" evidence="2">
    <location>
        <position position="89"/>
    </location>
    <ligand>
        <name>thiamine diphosphate</name>
        <dbReference type="ChEBI" id="CHEBI:58937"/>
        <note>ligand shared with alpha subunit</note>
    </ligand>
</feature>
<feature type="binding site" evidence="2">
    <location>
        <position position="142"/>
    </location>
    <ligand>
        <name>K(+)</name>
        <dbReference type="ChEBI" id="CHEBI:29103"/>
        <note>structural</note>
    </ligand>
</feature>
<feature type="binding site" evidence="2">
    <location>
        <position position="190"/>
    </location>
    <ligand>
        <name>K(+)</name>
        <dbReference type="ChEBI" id="CHEBI:29103"/>
        <note>structural</note>
    </ligand>
</feature>
<feature type="binding site" evidence="2">
    <location>
        <position position="191"/>
    </location>
    <ligand>
        <name>K(+)</name>
        <dbReference type="ChEBI" id="CHEBI:29103"/>
        <note>structural</note>
    </ligand>
</feature>
<feature type="binding site" evidence="2">
    <location>
        <position position="193"/>
    </location>
    <ligand>
        <name>K(+)</name>
        <dbReference type="ChEBI" id="CHEBI:29103"/>
        <note>structural</note>
    </ligand>
</feature>
<feature type="binding site" evidence="2">
    <location>
        <position position="195"/>
    </location>
    <ligand>
        <name>K(+)</name>
        <dbReference type="ChEBI" id="CHEBI:29103"/>
        <note>structural</note>
    </ligand>
</feature>
<feature type="site" description="Important for interaction with DLAT" evidence="2">
    <location>
        <position position="319"/>
    </location>
</feature>
<feature type="modified residue" description="Phosphotyrosine" evidence="3">
    <location>
        <position position="67"/>
    </location>
</feature>
<feature type="modified residue" description="N6-acetyllysine" evidence="3">
    <location>
        <position position="354"/>
    </location>
</feature>
<feature type="sequence conflict" description="In Ref. 1." evidence="5" ref="1">
    <original>A</original>
    <variation>G</variation>
    <location>
        <position position="3"/>
    </location>
</feature>
<feature type="sequence conflict" description="In Ref. 1." evidence="5" ref="1">
    <original>PLRQA</original>
    <variation>LCGRL</variation>
    <location>
        <begin position="11"/>
        <end position="15"/>
    </location>
</feature>
<feature type="sequence conflict" description="In Ref. 1." evidence="5" ref="1">
    <original>R</original>
    <variation>L</variation>
    <location>
        <position position="22"/>
    </location>
</feature>
<feature type="sequence conflict" description="In Ref. 1." evidence="5" ref="1">
    <original>R</original>
    <variation>C</variation>
    <location>
        <position position="25"/>
    </location>
</feature>
<feature type="sequence conflict" description="In Ref. 1." evidence="5" ref="1">
    <original>T</original>
    <variation>N</variation>
    <location>
        <position position="238"/>
    </location>
</feature>
<feature type="sequence conflict" description="In Ref. 1." evidence="5" ref="1">
    <original>AH</original>
    <variation>CY</variation>
    <location>
        <begin position="241"/>
        <end position="242"/>
    </location>
</feature>
<feature type="sequence conflict" description="In Ref. 1." evidence="5" ref="1">
    <original>E</original>
    <variation>G</variation>
    <location>
        <position position="259"/>
    </location>
</feature>
<comment type="function">
    <text evidence="1">The pyruvate dehydrogenase complex catalyzes the overall conversion of pyruvate to acetyl-CoA and CO(2), and thereby links the glycolytic pathway to the tricarboxylic cycle.</text>
</comment>
<comment type="catalytic activity">
    <reaction>
        <text>N(6)-[(R)-lipoyl]-L-lysyl-[protein] + pyruvate + H(+) = N(6)-[(R)-S(8)-acetyldihydrolipoyl]-L-lysyl-[protein] + CO2</text>
        <dbReference type="Rhea" id="RHEA:19189"/>
        <dbReference type="Rhea" id="RHEA-COMP:10474"/>
        <dbReference type="Rhea" id="RHEA-COMP:10478"/>
        <dbReference type="ChEBI" id="CHEBI:15361"/>
        <dbReference type="ChEBI" id="CHEBI:15378"/>
        <dbReference type="ChEBI" id="CHEBI:16526"/>
        <dbReference type="ChEBI" id="CHEBI:83099"/>
        <dbReference type="ChEBI" id="CHEBI:83111"/>
        <dbReference type="EC" id="1.2.4.1"/>
    </reaction>
</comment>
<comment type="cofactor">
    <cofactor evidence="2">
        <name>thiamine diphosphate</name>
        <dbReference type="ChEBI" id="CHEBI:58937"/>
    </cofactor>
</comment>
<comment type="subunit">
    <text evidence="2">Heterotetramer of two PDHA1 and two PDHB subunits. The heterotetramer interacts with DLAT, and is part of the multimeric pyruvate dehydrogenase complex that contains multiple copies of pyruvate dehydrogenase (E1), dihydrolipoamide acetyltransferase (DLAT, E2) and lipoamide dehydrogenase (DLD, E3). These subunits are bound to an inner core composed of about 48 DLAT and 12 PDHX molecules. Interacts with DLAT.</text>
</comment>
<comment type="subcellular location">
    <subcellularLocation>
        <location evidence="1">Mitochondrion matrix</location>
    </subcellularLocation>
</comment>